<dbReference type="EMBL" id="AL954747">
    <property type="protein sequence ID" value="CAD86370.1"/>
    <property type="molecule type" value="Genomic_DNA"/>
</dbReference>
<dbReference type="SMR" id="Q82S94"/>
<dbReference type="STRING" id="228410.NE2458"/>
<dbReference type="GeneID" id="87105587"/>
<dbReference type="KEGG" id="neu:NE2458"/>
<dbReference type="eggNOG" id="COG0218">
    <property type="taxonomic scope" value="Bacteria"/>
</dbReference>
<dbReference type="HOGENOM" id="CLU_033732_1_0_4"/>
<dbReference type="OrthoDB" id="9804921at2"/>
<dbReference type="PhylomeDB" id="Q82S94"/>
<dbReference type="Proteomes" id="UP000001416">
    <property type="component" value="Chromosome"/>
</dbReference>
<dbReference type="GO" id="GO:0005829">
    <property type="term" value="C:cytosol"/>
    <property type="evidence" value="ECO:0007669"/>
    <property type="project" value="TreeGrafter"/>
</dbReference>
<dbReference type="GO" id="GO:0005525">
    <property type="term" value="F:GTP binding"/>
    <property type="evidence" value="ECO:0007669"/>
    <property type="project" value="UniProtKB-UniRule"/>
</dbReference>
<dbReference type="GO" id="GO:0046872">
    <property type="term" value="F:metal ion binding"/>
    <property type="evidence" value="ECO:0007669"/>
    <property type="project" value="UniProtKB-KW"/>
</dbReference>
<dbReference type="GO" id="GO:0000917">
    <property type="term" value="P:division septum assembly"/>
    <property type="evidence" value="ECO:0007669"/>
    <property type="project" value="UniProtKB-KW"/>
</dbReference>
<dbReference type="CDD" id="cd01876">
    <property type="entry name" value="YihA_EngB"/>
    <property type="match status" value="1"/>
</dbReference>
<dbReference type="FunFam" id="3.40.50.300:FF:000098">
    <property type="entry name" value="Probable GTP-binding protein EngB"/>
    <property type="match status" value="1"/>
</dbReference>
<dbReference type="Gene3D" id="3.40.50.300">
    <property type="entry name" value="P-loop containing nucleotide triphosphate hydrolases"/>
    <property type="match status" value="1"/>
</dbReference>
<dbReference type="HAMAP" id="MF_00321">
    <property type="entry name" value="GTPase_EngB"/>
    <property type="match status" value="1"/>
</dbReference>
<dbReference type="InterPro" id="IPR030393">
    <property type="entry name" value="G_ENGB_dom"/>
</dbReference>
<dbReference type="InterPro" id="IPR006073">
    <property type="entry name" value="GTP-bd"/>
</dbReference>
<dbReference type="InterPro" id="IPR019987">
    <property type="entry name" value="GTP-bd_ribosome_bio_YsxC"/>
</dbReference>
<dbReference type="InterPro" id="IPR027417">
    <property type="entry name" value="P-loop_NTPase"/>
</dbReference>
<dbReference type="NCBIfam" id="TIGR03598">
    <property type="entry name" value="GTPase_YsxC"/>
    <property type="match status" value="1"/>
</dbReference>
<dbReference type="PANTHER" id="PTHR11649:SF13">
    <property type="entry name" value="ENGB-TYPE G DOMAIN-CONTAINING PROTEIN"/>
    <property type="match status" value="1"/>
</dbReference>
<dbReference type="PANTHER" id="PTHR11649">
    <property type="entry name" value="MSS1/TRME-RELATED GTP-BINDING PROTEIN"/>
    <property type="match status" value="1"/>
</dbReference>
<dbReference type="Pfam" id="PF01926">
    <property type="entry name" value="MMR_HSR1"/>
    <property type="match status" value="1"/>
</dbReference>
<dbReference type="SUPFAM" id="SSF52540">
    <property type="entry name" value="P-loop containing nucleoside triphosphate hydrolases"/>
    <property type="match status" value="1"/>
</dbReference>
<dbReference type="PROSITE" id="PS51706">
    <property type="entry name" value="G_ENGB"/>
    <property type="match status" value="1"/>
</dbReference>
<protein>
    <recommendedName>
        <fullName evidence="1">Probable GTP-binding protein EngB</fullName>
    </recommendedName>
</protein>
<sequence>MTHPLFRHAEFYTTVNRLQDLPQTAGVEVAFAGRSNAGKSSAINTLVGRERFAFVSKTPGRTQHINFFQLGEERFMVDLPGYGYAQVPLAIRQHWGHLLSSYLQTRQSLYGMILIMDIRHPLTKLDLQMLDWFRQTKKPVHVLLTKADKLSKSRALVALNEVRQFLTVNYPHCTVQTFSSLKVAGVEEASQLLQNWFDTGHASVQQENGEISEQKKTPAKGD</sequence>
<feature type="chain" id="PRO_0000266907" description="Probable GTP-binding protein EngB">
    <location>
        <begin position="1"/>
        <end position="222"/>
    </location>
</feature>
<feature type="domain" description="EngB-type G" evidence="1">
    <location>
        <begin position="25"/>
        <end position="199"/>
    </location>
</feature>
<feature type="binding site" evidence="1">
    <location>
        <begin position="33"/>
        <end position="40"/>
    </location>
    <ligand>
        <name>GTP</name>
        <dbReference type="ChEBI" id="CHEBI:37565"/>
    </ligand>
</feature>
<feature type="binding site" evidence="1">
    <location>
        <position position="40"/>
    </location>
    <ligand>
        <name>Mg(2+)</name>
        <dbReference type="ChEBI" id="CHEBI:18420"/>
    </ligand>
</feature>
<feature type="binding site" evidence="1">
    <location>
        <begin position="60"/>
        <end position="64"/>
    </location>
    <ligand>
        <name>GTP</name>
        <dbReference type="ChEBI" id="CHEBI:37565"/>
    </ligand>
</feature>
<feature type="binding site" evidence="1">
    <location>
        <position position="62"/>
    </location>
    <ligand>
        <name>Mg(2+)</name>
        <dbReference type="ChEBI" id="CHEBI:18420"/>
    </ligand>
</feature>
<feature type="binding site" evidence="1">
    <location>
        <begin position="78"/>
        <end position="81"/>
    </location>
    <ligand>
        <name>GTP</name>
        <dbReference type="ChEBI" id="CHEBI:37565"/>
    </ligand>
</feature>
<feature type="binding site" evidence="1">
    <location>
        <begin position="145"/>
        <end position="148"/>
    </location>
    <ligand>
        <name>GTP</name>
        <dbReference type="ChEBI" id="CHEBI:37565"/>
    </ligand>
</feature>
<feature type="binding site" evidence="1">
    <location>
        <begin position="178"/>
        <end position="180"/>
    </location>
    <ligand>
        <name>GTP</name>
        <dbReference type="ChEBI" id="CHEBI:37565"/>
    </ligand>
</feature>
<accession>Q82S94</accession>
<name>ENGB_NITEU</name>
<gene>
    <name evidence="1" type="primary">engB</name>
    <name type="ordered locus">NE2458</name>
</gene>
<reference key="1">
    <citation type="journal article" date="2003" name="J. Bacteriol.">
        <title>Complete genome sequence of the ammonia-oxidizing bacterium and obligate chemolithoautotroph Nitrosomonas europaea.</title>
        <authorList>
            <person name="Chain P."/>
            <person name="Lamerdin J.E."/>
            <person name="Larimer F.W."/>
            <person name="Regala W."/>
            <person name="Lao V."/>
            <person name="Land M.L."/>
            <person name="Hauser L."/>
            <person name="Hooper A.B."/>
            <person name="Klotz M.G."/>
            <person name="Norton J."/>
            <person name="Sayavedra-Soto L.A."/>
            <person name="Arciero D.M."/>
            <person name="Hommes N.G."/>
            <person name="Whittaker M.M."/>
            <person name="Arp D.J."/>
        </authorList>
    </citation>
    <scope>NUCLEOTIDE SEQUENCE [LARGE SCALE GENOMIC DNA]</scope>
    <source>
        <strain>ATCC 19718 / CIP 103999 / KCTC 2705 / NBRC 14298</strain>
    </source>
</reference>
<evidence type="ECO:0000255" key="1">
    <source>
        <dbReference type="HAMAP-Rule" id="MF_00321"/>
    </source>
</evidence>
<keyword id="KW-0131">Cell cycle</keyword>
<keyword id="KW-0132">Cell division</keyword>
<keyword id="KW-0342">GTP-binding</keyword>
<keyword id="KW-0460">Magnesium</keyword>
<keyword id="KW-0479">Metal-binding</keyword>
<keyword id="KW-0547">Nucleotide-binding</keyword>
<keyword id="KW-1185">Reference proteome</keyword>
<keyword id="KW-0717">Septation</keyword>
<proteinExistence type="inferred from homology"/>
<comment type="function">
    <text evidence="1">Necessary for normal cell division and for the maintenance of normal septation.</text>
</comment>
<comment type="cofactor">
    <cofactor evidence="1">
        <name>Mg(2+)</name>
        <dbReference type="ChEBI" id="CHEBI:18420"/>
    </cofactor>
</comment>
<comment type="similarity">
    <text evidence="1">Belongs to the TRAFAC class TrmE-Era-EngA-EngB-Septin-like GTPase superfamily. EngB GTPase family.</text>
</comment>
<organism>
    <name type="scientific">Nitrosomonas europaea (strain ATCC 19718 / CIP 103999 / KCTC 2705 / NBRC 14298)</name>
    <dbReference type="NCBI Taxonomy" id="228410"/>
    <lineage>
        <taxon>Bacteria</taxon>
        <taxon>Pseudomonadati</taxon>
        <taxon>Pseudomonadota</taxon>
        <taxon>Betaproteobacteria</taxon>
        <taxon>Nitrosomonadales</taxon>
        <taxon>Nitrosomonadaceae</taxon>
        <taxon>Nitrosomonas</taxon>
    </lineage>
</organism>